<protein>
    <recommendedName>
        <fullName>D-inositol 3-phosphate glycosyltransferase</fullName>
        <ecNumber evidence="1">2.4.1.250</ecNumber>
    </recommendedName>
    <alternativeName>
        <fullName evidence="1">N-acetylglucosamine-inositol-phosphate N-acetylglucosaminyltransferase</fullName>
        <shortName evidence="1">GlcNAc-Ins-P N-acetylglucosaminyltransferase</shortName>
    </alternativeName>
</protein>
<feature type="chain" id="PRO_0000400163" description="D-inositol 3-phosphate glycosyltransferase">
    <location>
        <begin position="1"/>
        <end position="472"/>
    </location>
</feature>
<feature type="binding site" evidence="1">
    <location>
        <position position="48"/>
    </location>
    <ligand>
        <name>1D-myo-inositol 3-phosphate</name>
        <dbReference type="ChEBI" id="CHEBI:58401"/>
    </ligand>
</feature>
<feature type="binding site" evidence="1">
    <location>
        <begin position="54"/>
        <end position="55"/>
    </location>
    <ligand>
        <name>UDP-N-acetyl-alpha-D-glucosamine</name>
        <dbReference type="ChEBI" id="CHEBI:57705"/>
    </ligand>
</feature>
<feature type="binding site" evidence="1">
    <location>
        <begin position="59"/>
        <end position="64"/>
    </location>
    <ligand>
        <name>1D-myo-inositol 3-phosphate</name>
        <dbReference type="ChEBI" id="CHEBI:58401"/>
    </ligand>
</feature>
<feature type="binding site" evidence="1">
    <location>
        <position position="62"/>
    </location>
    <ligand>
        <name>UDP-N-acetyl-alpha-D-glucosamine</name>
        <dbReference type="ChEBI" id="CHEBI:57705"/>
    </ligand>
</feature>
<feature type="binding site" evidence="1">
    <location>
        <position position="117"/>
    </location>
    <ligand>
        <name>1D-myo-inositol 3-phosphate</name>
        <dbReference type="ChEBI" id="CHEBI:58401"/>
    </ligand>
</feature>
<feature type="binding site" evidence="1">
    <location>
        <position position="150"/>
    </location>
    <ligand>
        <name>1D-myo-inositol 3-phosphate</name>
        <dbReference type="ChEBI" id="CHEBI:58401"/>
    </ligand>
</feature>
<feature type="binding site" evidence="1">
    <location>
        <position position="174"/>
    </location>
    <ligand>
        <name>1D-myo-inositol 3-phosphate</name>
        <dbReference type="ChEBI" id="CHEBI:58401"/>
    </ligand>
</feature>
<feature type="binding site" evidence="1">
    <location>
        <position position="194"/>
    </location>
    <ligand>
        <name>1D-myo-inositol 3-phosphate</name>
        <dbReference type="ChEBI" id="CHEBI:58401"/>
    </ligand>
</feature>
<feature type="binding site" evidence="1">
    <location>
        <position position="282"/>
    </location>
    <ligand>
        <name>UDP-N-acetyl-alpha-D-glucosamine</name>
        <dbReference type="ChEBI" id="CHEBI:57705"/>
    </ligand>
</feature>
<feature type="binding site" evidence="1">
    <location>
        <position position="287"/>
    </location>
    <ligand>
        <name>UDP-N-acetyl-alpha-D-glucosamine</name>
        <dbReference type="ChEBI" id="CHEBI:57705"/>
    </ligand>
</feature>
<feature type="binding site" evidence="1">
    <location>
        <position position="348"/>
    </location>
    <ligand>
        <name>UDP-N-acetyl-alpha-D-glucosamine</name>
        <dbReference type="ChEBI" id="CHEBI:57705"/>
    </ligand>
</feature>
<feature type="binding site" evidence="1">
    <location>
        <position position="357"/>
    </location>
    <ligand>
        <name>Mg(2+)</name>
        <dbReference type="ChEBI" id="CHEBI:18420"/>
    </ligand>
</feature>
<feature type="binding site" evidence="1">
    <location>
        <position position="358"/>
    </location>
    <ligand>
        <name>Mg(2+)</name>
        <dbReference type="ChEBI" id="CHEBI:18420"/>
    </ligand>
</feature>
<feature type="binding site" evidence="1">
    <location>
        <position position="360"/>
    </location>
    <ligand>
        <name>Mg(2+)</name>
        <dbReference type="ChEBI" id="CHEBI:18420"/>
    </ligand>
</feature>
<feature type="binding site" evidence="1">
    <location>
        <position position="370"/>
    </location>
    <ligand>
        <name>UDP-N-acetyl-alpha-D-glucosamine</name>
        <dbReference type="ChEBI" id="CHEBI:57705"/>
    </ligand>
</feature>
<feature type="binding site" evidence="1">
    <location>
        <position position="378"/>
    </location>
    <ligand>
        <name>UDP-N-acetyl-alpha-D-glucosamine</name>
        <dbReference type="ChEBI" id="CHEBI:57705"/>
    </ligand>
</feature>
<feature type="binding site" evidence="1">
    <location>
        <position position="384"/>
    </location>
    <ligand>
        <name>Mg(2+)</name>
        <dbReference type="ChEBI" id="CHEBI:18420"/>
    </ligand>
</feature>
<proteinExistence type="inferred from homology"/>
<reference key="1">
    <citation type="journal article" date="2008" name="J. Bacteriol.">
        <title>Genome sequence of the streptomycin-producing microorganism Streptomyces griseus IFO 13350.</title>
        <authorList>
            <person name="Ohnishi Y."/>
            <person name="Ishikawa J."/>
            <person name="Hara H."/>
            <person name="Suzuki H."/>
            <person name="Ikenoya M."/>
            <person name="Ikeda H."/>
            <person name="Yamashita A."/>
            <person name="Hattori M."/>
            <person name="Horinouchi S."/>
        </authorList>
    </citation>
    <scope>NUCLEOTIDE SEQUENCE [LARGE SCALE GENOMIC DNA]</scope>
    <source>
        <strain>JCM 4626 / CBS 651.72 / NBRC 13350 / KCC S-0626 / ISP 5235</strain>
    </source>
</reference>
<gene>
    <name evidence="1" type="primary">mshA</name>
    <name type="ordered locus">SGR_3993</name>
</gene>
<comment type="function">
    <text evidence="1">Catalyzes the transfer of a N-acetyl-glucosamine moiety to 1D-myo-inositol 3-phosphate to produce 1D-myo-inositol 2-acetamido-2-deoxy-glucopyranoside 3-phosphate in the mycothiol biosynthesis pathway.</text>
</comment>
<comment type="catalytic activity">
    <reaction evidence="1">
        <text>1D-myo-inositol 3-phosphate + UDP-N-acetyl-alpha-D-glucosamine = 1D-myo-inositol 2-acetamido-2-deoxy-alpha-D-glucopyranoside 3-phosphate + UDP + H(+)</text>
        <dbReference type="Rhea" id="RHEA:26188"/>
        <dbReference type="ChEBI" id="CHEBI:15378"/>
        <dbReference type="ChEBI" id="CHEBI:57705"/>
        <dbReference type="ChEBI" id="CHEBI:58223"/>
        <dbReference type="ChEBI" id="CHEBI:58401"/>
        <dbReference type="ChEBI" id="CHEBI:58892"/>
        <dbReference type="EC" id="2.4.1.250"/>
    </reaction>
</comment>
<comment type="subunit">
    <text evidence="1">Homodimer.</text>
</comment>
<comment type="similarity">
    <text evidence="1">Belongs to the glycosyltransferase group 1 family. MshA subfamily.</text>
</comment>
<keyword id="KW-0328">Glycosyltransferase</keyword>
<keyword id="KW-0460">Magnesium</keyword>
<keyword id="KW-0479">Metal-binding</keyword>
<keyword id="KW-0808">Transferase</keyword>
<sequence length="472" mass="50041">MPRSRRTDEVSQYVSRLGSTRTAARLRFPGGFSGASRKPRRVAMLSVHTSPLHQPGTGDAGGMNVYIVELAKRLAAINIEVEIFTRATTGSLAPTVELAPGVLVRHVDAGPYEGLAKEELPAQLCAFTHGVMQAWAGQRPGYYDLVHSHYWLSGQVGWLAAQRWGVPLVHAMHTMAKVKNAALAEGDTPEPAARVIGETQIVNASDRLIANTAEEADELVRFYDADPAAVAVVHPGVNLDRFRPFPQGSDELRPGNAPSGRAAARARLGLPQDALIPLFAGRIQPLKAPDVLLRAVAVLLDRDPSLRSRIVVPVVGGPSGSGLAKPEGLQKLAARLGIADVVRFHPPVGQERLADWFRAASVLVMPSYSESFGLVAIEAQATGTPVVAAAVGGLPVAVRDGVGGFLVQGHEPEAYARALGRFADAPELVERMGAAAAAHAQSFGWDTAASATADVYTAALSDHRRRARAHHG</sequence>
<accession>B1VS68</accession>
<organism>
    <name type="scientific">Streptomyces griseus subsp. griseus (strain JCM 4626 / CBS 651.72 / NBRC 13350 / KCC S-0626 / ISP 5235)</name>
    <dbReference type="NCBI Taxonomy" id="455632"/>
    <lineage>
        <taxon>Bacteria</taxon>
        <taxon>Bacillati</taxon>
        <taxon>Actinomycetota</taxon>
        <taxon>Actinomycetes</taxon>
        <taxon>Kitasatosporales</taxon>
        <taxon>Streptomycetaceae</taxon>
        <taxon>Streptomyces</taxon>
    </lineage>
</organism>
<dbReference type="EC" id="2.4.1.250" evidence="1"/>
<dbReference type="EMBL" id="AP009493">
    <property type="protein sequence ID" value="BAG20822.1"/>
    <property type="molecule type" value="Genomic_DNA"/>
</dbReference>
<dbReference type="SMR" id="B1VS68"/>
<dbReference type="CAZy" id="GT4">
    <property type="family name" value="Glycosyltransferase Family 4"/>
</dbReference>
<dbReference type="KEGG" id="sgr:SGR_3993"/>
<dbReference type="eggNOG" id="COG0438">
    <property type="taxonomic scope" value="Bacteria"/>
</dbReference>
<dbReference type="HOGENOM" id="CLU_009583_2_3_11"/>
<dbReference type="Proteomes" id="UP000001685">
    <property type="component" value="Chromosome"/>
</dbReference>
<dbReference type="GO" id="GO:0008375">
    <property type="term" value="F:acetylglucosaminyltransferase activity"/>
    <property type="evidence" value="ECO:0007669"/>
    <property type="project" value="UniProtKB-UniRule"/>
</dbReference>
<dbReference type="GO" id="GO:0102710">
    <property type="term" value="F:D-inositol-3-phosphate glycosyltransferase activity"/>
    <property type="evidence" value="ECO:0007669"/>
    <property type="project" value="UniProtKB-EC"/>
</dbReference>
<dbReference type="GO" id="GO:0000287">
    <property type="term" value="F:magnesium ion binding"/>
    <property type="evidence" value="ECO:0007669"/>
    <property type="project" value="UniProtKB-UniRule"/>
</dbReference>
<dbReference type="GO" id="GO:0010125">
    <property type="term" value="P:mycothiol biosynthetic process"/>
    <property type="evidence" value="ECO:0007669"/>
    <property type="project" value="UniProtKB-UniRule"/>
</dbReference>
<dbReference type="CDD" id="cd03800">
    <property type="entry name" value="GT4_sucrose_synthase"/>
    <property type="match status" value="1"/>
</dbReference>
<dbReference type="Gene3D" id="3.40.50.2000">
    <property type="entry name" value="Glycogen Phosphorylase B"/>
    <property type="match status" value="2"/>
</dbReference>
<dbReference type="HAMAP" id="MF_01695">
    <property type="entry name" value="MshA"/>
    <property type="match status" value="1"/>
</dbReference>
<dbReference type="InterPro" id="IPR001296">
    <property type="entry name" value="Glyco_trans_1"/>
</dbReference>
<dbReference type="InterPro" id="IPR028098">
    <property type="entry name" value="Glyco_trans_4-like_N"/>
</dbReference>
<dbReference type="InterPro" id="IPR017814">
    <property type="entry name" value="Mycothiol_biosynthesis_MshA"/>
</dbReference>
<dbReference type="NCBIfam" id="TIGR03449">
    <property type="entry name" value="mycothiol_MshA"/>
    <property type="match status" value="1"/>
</dbReference>
<dbReference type="PANTHER" id="PTHR12526:SF510">
    <property type="entry name" value="D-INOSITOL 3-PHOSPHATE GLYCOSYLTRANSFERASE"/>
    <property type="match status" value="1"/>
</dbReference>
<dbReference type="PANTHER" id="PTHR12526">
    <property type="entry name" value="GLYCOSYLTRANSFERASE"/>
    <property type="match status" value="1"/>
</dbReference>
<dbReference type="Pfam" id="PF13579">
    <property type="entry name" value="Glyco_trans_4_4"/>
    <property type="match status" value="1"/>
</dbReference>
<dbReference type="Pfam" id="PF00534">
    <property type="entry name" value="Glycos_transf_1"/>
    <property type="match status" value="1"/>
</dbReference>
<dbReference type="SUPFAM" id="SSF53756">
    <property type="entry name" value="UDP-Glycosyltransferase/glycogen phosphorylase"/>
    <property type="match status" value="1"/>
</dbReference>
<evidence type="ECO:0000255" key="1">
    <source>
        <dbReference type="HAMAP-Rule" id="MF_01695"/>
    </source>
</evidence>
<name>MSHA_STRGG</name>